<proteinExistence type="inferred from homology"/>
<dbReference type="EC" id="2.4.2.-" evidence="1"/>
<dbReference type="EC" id="2.4.2.22" evidence="1"/>
<dbReference type="EMBL" id="CP001120">
    <property type="protein sequence ID" value="ACF67330.1"/>
    <property type="molecule type" value="Genomic_DNA"/>
</dbReference>
<dbReference type="RefSeq" id="WP_001292018.1">
    <property type="nucleotide sequence ID" value="NC_011083.1"/>
</dbReference>
<dbReference type="SMR" id="B4T7Q0"/>
<dbReference type="GeneID" id="66754798"/>
<dbReference type="KEGG" id="seh:SeHA_C0358"/>
<dbReference type="HOGENOM" id="CLU_080904_3_0_6"/>
<dbReference type="UniPathway" id="UPA00602">
    <property type="reaction ID" value="UER00658"/>
</dbReference>
<dbReference type="UniPathway" id="UPA00909">
    <property type="reaction ID" value="UER00887"/>
</dbReference>
<dbReference type="Proteomes" id="UP000001866">
    <property type="component" value="Chromosome"/>
</dbReference>
<dbReference type="GO" id="GO:0005829">
    <property type="term" value="C:cytosol"/>
    <property type="evidence" value="ECO:0007669"/>
    <property type="project" value="TreeGrafter"/>
</dbReference>
<dbReference type="GO" id="GO:0005886">
    <property type="term" value="C:plasma membrane"/>
    <property type="evidence" value="ECO:0007669"/>
    <property type="project" value="UniProtKB-SubCell"/>
</dbReference>
<dbReference type="GO" id="GO:0052657">
    <property type="term" value="F:guanine phosphoribosyltransferase activity"/>
    <property type="evidence" value="ECO:0007669"/>
    <property type="project" value="RHEA"/>
</dbReference>
<dbReference type="GO" id="GO:0004422">
    <property type="term" value="F:hypoxanthine phosphoribosyltransferase activity"/>
    <property type="evidence" value="ECO:0007669"/>
    <property type="project" value="TreeGrafter"/>
</dbReference>
<dbReference type="GO" id="GO:0000287">
    <property type="term" value="F:magnesium ion binding"/>
    <property type="evidence" value="ECO:0007669"/>
    <property type="project" value="UniProtKB-UniRule"/>
</dbReference>
<dbReference type="GO" id="GO:0000310">
    <property type="term" value="F:xanthine phosphoribosyltransferase activity"/>
    <property type="evidence" value="ECO:0007669"/>
    <property type="project" value="UniProtKB-UniRule"/>
</dbReference>
<dbReference type="GO" id="GO:0032263">
    <property type="term" value="P:GMP salvage"/>
    <property type="evidence" value="ECO:0007669"/>
    <property type="project" value="UniProtKB-UniRule"/>
</dbReference>
<dbReference type="GO" id="GO:0032264">
    <property type="term" value="P:IMP salvage"/>
    <property type="evidence" value="ECO:0007669"/>
    <property type="project" value="TreeGrafter"/>
</dbReference>
<dbReference type="GO" id="GO:0006166">
    <property type="term" value="P:purine ribonucleoside salvage"/>
    <property type="evidence" value="ECO:0007669"/>
    <property type="project" value="UniProtKB-KW"/>
</dbReference>
<dbReference type="GO" id="GO:0032265">
    <property type="term" value="P:XMP salvage"/>
    <property type="evidence" value="ECO:0007669"/>
    <property type="project" value="UniProtKB-UniRule"/>
</dbReference>
<dbReference type="CDD" id="cd06223">
    <property type="entry name" value="PRTases_typeI"/>
    <property type="match status" value="1"/>
</dbReference>
<dbReference type="FunFam" id="3.40.50.2020:FF:000009">
    <property type="entry name" value="Xanthine phosphoribosyltransferase"/>
    <property type="match status" value="1"/>
</dbReference>
<dbReference type="Gene3D" id="3.40.50.2020">
    <property type="match status" value="1"/>
</dbReference>
<dbReference type="HAMAP" id="MF_01903">
    <property type="entry name" value="XGPRT"/>
    <property type="match status" value="1"/>
</dbReference>
<dbReference type="InterPro" id="IPR000836">
    <property type="entry name" value="PRibTrfase_dom"/>
</dbReference>
<dbReference type="InterPro" id="IPR029057">
    <property type="entry name" value="PRTase-like"/>
</dbReference>
<dbReference type="InterPro" id="IPR023747">
    <property type="entry name" value="Xanthine_Guanine_PRibTrfase"/>
</dbReference>
<dbReference type="NCBIfam" id="NF006613">
    <property type="entry name" value="PRK09177.1"/>
    <property type="match status" value="1"/>
</dbReference>
<dbReference type="PANTHER" id="PTHR39563">
    <property type="entry name" value="XANTHINE PHOSPHORIBOSYLTRANSFERASE"/>
    <property type="match status" value="1"/>
</dbReference>
<dbReference type="PANTHER" id="PTHR39563:SF1">
    <property type="entry name" value="XANTHINE-GUANINE PHOSPHORIBOSYLTRANSFERASE"/>
    <property type="match status" value="1"/>
</dbReference>
<dbReference type="Pfam" id="PF00156">
    <property type="entry name" value="Pribosyltran"/>
    <property type="match status" value="1"/>
</dbReference>
<dbReference type="SUPFAM" id="SSF53271">
    <property type="entry name" value="PRTase-like"/>
    <property type="match status" value="1"/>
</dbReference>
<dbReference type="PROSITE" id="PS00103">
    <property type="entry name" value="PUR_PYR_PR_TRANSFER"/>
    <property type="match status" value="1"/>
</dbReference>
<gene>
    <name evidence="1" type="primary">gpt</name>
    <name type="ordered locus">SeHA_C0358</name>
</gene>
<comment type="function">
    <text evidence="1">Purine salvage pathway enzyme that catalyzes the transfer of the ribosyl-5-phosphate group from 5-phospho-alpha-D-ribose 1-diphosphate (PRPP) to the N9 position of the 6-oxopurines guanine and xanthine to form the corresponding ribonucleotides GMP (guanosine 5'-monophosphate) and XMP (xanthosine 5'-monophosphate), with the release of PPi. To a lesser extent, also acts on hypoxanthine.</text>
</comment>
<comment type="catalytic activity">
    <reaction evidence="1">
        <text>GMP + diphosphate = guanine + 5-phospho-alpha-D-ribose 1-diphosphate</text>
        <dbReference type="Rhea" id="RHEA:25424"/>
        <dbReference type="ChEBI" id="CHEBI:16235"/>
        <dbReference type="ChEBI" id="CHEBI:33019"/>
        <dbReference type="ChEBI" id="CHEBI:58017"/>
        <dbReference type="ChEBI" id="CHEBI:58115"/>
    </reaction>
    <physiologicalReaction direction="right-to-left" evidence="1">
        <dbReference type="Rhea" id="RHEA:25426"/>
    </physiologicalReaction>
</comment>
<comment type="catalytic activity">
    <reaction evidence="1">
        <text>XMP + diphosphate = xanthine + 5-phospho-alpha-D-ribose 1-diphosphate</text>
        <dbReference type="Rhea" id="RHEA:10800"/>
        <dbReference type="ChEBI" id="CHEBI:17712"/>
        <dbReference type="ChEBI" id="CHEBI:33019"/>
        <dbReference type="ChEBI" id="CHEBI:57464"/>
        <dbReference type="ChEBI" id="CHEBI:58017"/>
        <dbReference type="EC" id="2.4.2.22"/>
    </reaction>
    <physiologicalReaction direction="right-to-left" evidence="1">
        <dbReference type="Rhea" id="RHEA:10802"/>
    </physiologicalReaction>
</comment>
<comment type="catalytic activity">
    <reaction evidence="1">
        <text>IMP + diphosphate = hypoxanthine + 5-phospho-alpha-D-ribose 1-diphosphate</text>
        <dbReference type="Rhea" id="RHEA:17973"/>
        <dbReference type="ChEBI" id="CHEBI:17368"/>
        <dbReference type="ChEBI" id="CHEBI:33019"/>
        <dbReference type="ChEBI" id="CHEBI:58017"/>
        <dbReference type="ChEBI" id="CHEBI:58053"/>
    </reaction>
    <physiologicalReaction direction="right-to-left" evidence="1">
        <dbReference type="Rhea" id="RHEA:17975"/>
    </physiologicalReaction>
</comment>
<comment type="cofactor">
    <cofactor evidence="1">
        <name>Mg(2+)</name>
        <dbReference type="ChEBI" id="CHEBI:18420"/>
    </cofactor>
</comment>
<comment type="pathway">
    <text evidence="1">Purine metabolism; GMP biosynthesis via salvage pathway; GMP from guanine: step 1/1.</text>
</comment>
<comment type="pathway">
    <text evidence="1">Purine metabolism; XMP biosynthesis via salvage pathway; XMP from xanthine: step 1/1.</text>
</comment>
<comment type="subunit">
    <text evidence="1">Homotetramer.</text>
</comment>
<comment type="subcellular location">
    <subcellularLocation>
        <location evidence="1">Cell inner membrane</location>
        <topology evidence="1">Peripheral membrane protein</topology>
    </subcellularLocation>
</comment>
<comment type="similarity">
    <text evidence="1">Belongs to the purine/pyrimidine phosphoribosyltransferase family. XGPT subfamily.</text>
</comment>
<feature type="chain" id="PRO_1000188756" description="Xanthine-guanine phosphoribosyltransferase">
    <location>
        <begin position="1"/>
        <end position="152"/>
    </location>
</feature>
<feature type="binding site" evidence="1">
    <location>
        <begin position="37"/>
        <end position="38"/>
    </location>
    <ligand>
        <name>5-phospho-alpha-D-ribose 1-diphosphate</name>
        <dbReference type="ChEBI" id="CHEBI:58017"/>
    </ligand>
</feature>
<feature type="binding site" evidence="1">
    <location>
        <position position="69"/>
    </location>
    <ligand>
        <name>5-phospho-alpha-D-ribose 1-diphosphate</name>
        <dbReference type="ChEBI" id="CHEBI:58017"/>
    </ligand>
</feature>
<feature type="binding site" evidence="1">
    <location>
        <position position="69"/>
    </location>
    <ligand>
        <name>GMP</name>
        <dbReference type="ChEBI" id="CHEBI:58115"/>
    </ligand>
</feature>
<feature type="binding site" evidence="1">
    <location>
        <begin position="88"/>
        <end position="96"/>
    </location>
    <ligand>
        <name>5-phospho-alpha-D-ribose 1-diphosphate</name>
        <dbReference type="ChEBI" id="CHEBI:58017"/>
    </ligand>
</feature>
<feature type="binding site" evidence="1">
    <location>
        <position position="89"/>
    </location>
    <ligand>
        <name>Mg(2+)</name>
        <dbReference type="ChEBI" id="CHEBI:18420"/>
    </ligand>
</feature>
<feature type="binding site" evidence="1">
    <location>
        <begin position="92"/>
        <end position="96"/>
    </location>
    <ligand>
        <name>GMP</name>
        <dbReference type="ChEBI" id="CHEBI:58115"/>
    </ligand>
</feature>
<feature type="binding site" evidence="1">
    <location>
        <position position="92"/>
    </location>
    <ligand>
        <name>guanine</name>
        <dbReference type="ChEBI" id="CHEBI:16235"/>
    </ligand>
</feature>
<feature type="binding site" evidence="1">
    <location>
        <position position="92"/>
    </location>
    <ligand>
        <name>xanthine</name>
        <dbReference type="ChEBI" id="CHEBI:17712"/>
    </ligand>
</feature>
<feature type="binding site" evidence="1">
    <location>
        <begin position="134"/>
        <end position="135"/>
    </location>
    <ligand>
        <name>GMP</name>
        <dbReference type="ChEBI" id="CHEBI:58115"/>
    </ligand>
</feature>
<feature type="binding site" evidence="1">
    <location>
        <position position="135"/>
    </location>
    <ligand>
        <name>guanine</name>
        <dbReference type="ChEBI" id="CHEBI:16235"/>
    </ligand>
</feature>
<feature type="binding site" evidence="1">
    <location>
        <position position="135"/>
    </location>
    <ligand>
        <name>xanthine</name>
        <dbReference type="ChEBI" id="CHEBI:17712"/>
    </ligand>
</feature>
<keyword id="KW-0997">Cell inner membrane</keyword>
<keyword id="KW-1003">Cell membrane</keyword>
<keyword id="KW-0328">Glycosyltransferase</keyword>
<keyword id="KW-0460">Magnesium</keyword>
<keyword id="KW-0472">Membrane</keyword>
<keyword id="KW-0479">Metal-binding</keyword>
<keyword id="KW-0660">Purine salvage</keyword>
<keyword id="KW-0808">Transferase</keyword>
<organism>
    <name type="scientific">Salmonella heidelberg (strain SL476)</name>
    <dbReference type="NCBI Taxonomy" id="454169"/>
    <lineage>
        <taxon>Bacteria</taxon>
        <taxon>Pseudomonadati</taxon>
        <taxon>Pseudomonadota</taxon>
        <taxon>Gammaproteobacteria</taxon>
        <taxon>Enterobacterales</taxon>
        <taxon>Enterobacteriaceae</taxon>
        <taxon>Salmonella</taxon>
    </lineage>
</organism>
<sequence length="152" mass="16970">MSEKYVVTWDMLQIHARKLASRLMPSEQWKGIIAVSRGGLVPGALLARELGIRHVDTVCISSYDHDNQRELKVLKRAEGDGEGFIVIDDLVDTGGTAVAIREMYPKAHFVTIFAKPAGRPLVDDYVIDIPQNTWIEQPWDMGVVFVPPISGR</sequence>
<reference key="1">
    <citation type="journal article" date="2011" name="J. Bacteriol.">
        <title>Comparative genomics of 28 Salmonella enterica isolates: evidence for CRISPR-mediated adaptive sublineage evolution.</title>
        <authorList>
            <person name="Fricke W.F."/>
            <person name="Mammel M.K."/>
            <person name="McDermott P.F."/>
            <person name="Tartera C."/>
            <person name="White D.G."/>
            <person name="Leclerc J.E."/>
            <person name="Ravel J."/>
            <person name="Cebula T.A."/>
        </authorList>
    </citation>
    <scope>NUCLEOTIDE SEQUENCE [LARGE SCALE GENOMIC DNA]</scope>
    <source>
        <strain>SL476</strain>
    </source>
</reference>
<evidence type="ECO:0000255" key="1">
    <source>
        <dbReference type="HAMAP-Rule" id="MF_01903"/>
    </source>
</evidence>
<accession>B4T7Q0</accession>
<name>XGPT_SALHS</name>
<protein>
    <recommendedName>
        <fullName evidence="1">Xanthine-guanine phosphoribosyltransferase</fullName>
        <shortName evidence="1">XGPRT</shortName>
        <ecNumber evidence="1">2.4.2.-</ecNumber>
        <ecNumber evidence="1">2.4.2.22</ecNumber>
    </recommendedName>
    <alternativeName>
        <fullName evidence="1">Xanthine phosphoribosyltransferase</fullName>
    </alternativeName>
</protein>